<dbReference type="EC" id="2.4.2.-" evidence="12"/>
<dbReference type="EMBL" id="AF307338">
    <property type="protein sequence ID" value="AAK07558.1"/>
    <property type="molecule type" value="mRNA"/>
</dbReference>
<dbReference type="EMBL" id="AF307339">
    <property type="protein sequence ID" value="AAK07559.1"/>
    <property type="molecule type" value="mRNA"/>
</dbReference>
<dbReference type="EMBL" id="AK292959">
    <property type="protein sequence ID" value="BAF85648.1"/>
    <property type="molecule type" value="mRNA"/>
</dbReference>
<dbReference type="EMBL" id="AK313494">
    <property type="protein sequence ID" value="BAG36276.1"/>
    <property type="molecule type" value="mRNA"/>
</dbReference>
<dbReference type="EMBL" id="AC092908">
    <property type="status" value="NOT_ANNOTATED_CDS"/>
    <property type="molecule type" value="Genomic_DNA"/>
</dbReference>
<dbReference type="EMBL" id="AC096861">
    <property type="status" value="NOT_ANNOTATED_CDS"/>
    <property type="molecule type" value="Genomic_DNA"/>
</dbReference>
<dbReference type="EMBL" id="BC017463">
    <property type="status" value="NOT_ANNOTATED_CDS"/>
    <property type="molecule type" value="mRNA"/>
</dbReference>
<dbReference type="EMBL" id="BC039580">
    <property type="protein sequence ID" value="AAH39580.1"/>
    <property type="molecule type" value="mRNA"/>
</dbReference>
<dbReference type="EMBL" id="AL713679">
    <property type="protein sequence ID" value="CAD28483.1"/>
    <property type="molecule type" value="mRNA"/>
</dbReference>
<dbReference type="CCDS" id="CCDS3014.1">
    <molecule id="Q8IXQ6-1"/>
</dbReference>
<dbReference type="CCDS" id="CCDS54633.1">
    <molecule id="Q8IXQ6-3"/>
</dbReference>
<dbReference type="CCDS" id="CCDS54634.1">
    <molecule id="Q8IXQ6-2"/>
</dbReference>
<dbReference type="RefSeq" id="NP_001139574.1">
    <molecule id="Q8IXQ6-1"/>
    <property type="nucleotide sequence ID" value="NM_001146102.2"/>
</dbReference>
<dbReference type="RefSeq" id="NP_001139575.1">
    <molecule id="Q8IXQ6-2"/>
    <property type="nucleotide sequence ID" value="NM_001146103.2"/>
</dbReference>
<dbReference type="RefSeq" id="NP_001139576.1">
    <molecule id="Q8IXQ6-2"/>
    <property type="nucleotide sequence ID" value="NM_001146104.2"/>
</dbReference>
<dbReference type="RefSeq" id="NP_001139577.1">
    <molecule id="Q8IXQ6-2"/>
    <property type="nucleotide sequence ID" value="NM_001146105.2"/>
</dbReference>
<dbReference type="RefSeq" id="NP_001139578.1">
    <molecule id="Q8IXQ6-3"/>
    <property type="nucleotide sequence ID" value="NM_001146106.3"/>
</dbReference>
<dbReference type="RefSeq" id="NP_001374800.1">
    <molecule id="Q8IXQ6-1"/>
    <property type="nucleotide sequence ID" value="NM_001387871.1"/>
</dbReference>
<dbReference type="RefSeq" id="NP_001374801.1">
    <molecule id="Q8IXQ6-1"/>
    <property type="nucleotide sequence ID" value="NM_001387872.1"/>
</dbReference>
<dbReference type="RefSeq" id="NP_001374804.1">
    <molecule id="Q8IXQ6-2"/>
    <property type="nucleotide sequence ID" value="NM_001387875.1"/>
</dbReference>
<dbReference type="RefSeq" id="NP_001374805.1">
    <molecule id="Q8IXQ6-2"/>
    <property type="nucleotide sequence ID" value="NM_001387876.1"/>
</dbReference>
<dbReference type="RefSeq" id="NP_001374806.1">
    <molecule id="Q8IXQ6-2"/>
    <property type="nucleotide sequence ID" value="NM_001387877.1"/>
</dbReference>
<dbReference type="RefSeq" id="NP_001374814.1">
    <molecule id="Q8IXQ6-3"/>
    <property type="nucleotide sequence ID" value="NM_001387885.1"/>
</dbReference>
<dbReference type="RefSeq" id="NP_001374815.1">
    <molecule id="Q8IXQ6-3"/>
    <property type="nucleotide sequence ID" value="NM_001387886.1"/>
</dbReference>
<dbReference type="RefSeq" id="NP_001374816.1">
    <molecule id="Q8IXQ6-3"/>
    <property type="nucleotide sequence ID" value="NM_001387887.1"/>
</dbReference>
<dbReference type="RefSeq" id="NP_113646.2">
    <molecule id="Q8IXQ6-1"/>
    <property type="nucleotide sequence ID" value="NM_031458.3"/>
</dbReference>
<dbReference type="RefSeq" id="XP_005247877.1">
    <property type="nucleotide sequence ID" value="XM_005247820.2"/>
</dbReference>
<dbReference type="RefSeq" id="XP_016862793.1">
    <property type="nucleotide sequence ID" value="XM_017007304.1"/>
</dbReference>
<dbReference type="RefSeq" id="XP_016862794.1">
    <property type="nucleotide sequence ID" value="XM_017007305.1"/>
</dbReference>
<dbReference type="RefSeq" id="XP_016862795.1">
    <property type="nucleotide sequence ID" value="XM_017007306.1"/>
</dbReference>
<dbReference type="PDB" id="5AIL">
    <property type="method" value="X-ray"/>
    <property type="resolution" value="1.55 A"/>
    <property type="chains" value="A/B=310-493"/>
</dbReference>
<dbReference type="PDBsum" id="5AIL"/>
<dbReference type="SMR" id="Q8IXQ6"/>
<dbReference type="BioGRID" id="123723">
    <property type="interactions" value="32"/>
</dbReference>
<dbReference type="CORUM" id="Q8IXQ6"/>
<dbReference type="FunCoup" id="Q8IXQ6">
    <property type="interactions" value="899"/>
</dbReference>
<dbReference type="IntAct" id="Q8IXQ6">
    <property type="interactions" value="6"/>
</dbReference>
<dbReference type="MINT" id="Q8IXQ6"/>
<dbReference type="STRING" id="9606.ENSP00000353512"/>
<dbReference type="BindingDB" id="Q8IXQ6"/>
<dbReference type="ChEMBL" id="CHEMBL4295895"/>
<dbReference type="GlyGen" id="Q8IXQ6">
    <property type="glycosylation" value="1 site"/>
</dbReference>
<dbReference type="iPTMnet" id="Q8IXQ6"/>
<dbReference type="MetOSite" id="Q8IXQ6"/>
<dbReference type="PhosphoSitePlus" id="Q8IXQ6"/>
<dbReference type="BioMuta" id="PARP9"/>
<dbReference type="DMDM" id="48474734"/>
<dbReference type="jPOST" id="Q8IXQ6"/>
<dbReference type="MassIVE" id="Q8IXQ6"/>
<dbReference type="PaxDb" id="9606-ENSP00000353512"/>
<dbReference type="PeptideAtlas" id="Q8IXQ6"/>
<dbReference type="ProteomicsDB" id="20136"/>
<dbReference type="ProteomicsDB" id="71045">
    <molecule id="Q8IXQ6-1"/>
</dbReference>
<dbReference type="ProteomicsDB" id="71046">
    <molecule id="Q8IXQ6-2"/>
</dbReference>
<dbReference type="Pumba" id="Q8IXQ6"/>
<dbReference type="Antibodypedia" id="32910">
    <property type="antibodies" value="95 antibodies from 27 providers"/>
</dbReference>
<dbReference type="DNASU" id="83666"/>
<dbReference type="Ensembl" id="ENST00000360356.6">
    <molecule id="Q8IXQ6-1"/>
    <property type="protein sequence ID" value="ENSP00000353512.2"/>
    <property type="gene ID" value="ENSG00000138496.17"/>
</dbReference>
<dbReference type="Ensembl" id="ENST00000462315.5">
    <molecule id="Q8IXQ6-3"/>
    <property type="protein sequence ID" value="ENSP00000418894.1"/>
    <property type="gene ID" value="ENSG00000138496.17"/>
</dbReference>
<dbReference type="Ensembl" id="ENST00000471785.5">
    <molecule id="Q8IXQ6-2"/>
    <property type="protein sequence ID" value="ENSP00000419001.1"/>
    <property type="gene ID" value="ENSG00000138496.17"/>
</dbReference>
<dbReference type="Ensembl" id="ENST00000477522.6">
    <molecule id="Q8IXQ6-2"/>
    <property type="protein sequence ID" value="ENSP00000419506.1"/>
    <property type="gene ID" value="ENSG00000138496.17"/>
</dbReference>
<dbReference type="Ensembl" id="ENST00000682323.1">
    <molecule id="Q8IXQ6-2"/>
    <property type="protein sequence ID" value="ENSP00000507390.1"/>
    <property type="gene ID" value="ENSG00000138496.17"/>
</dbReference>
<dbReference type="GeneID" id="83666"/>
<dbReference type="KEGG" id="hsa:83666"/>
<dbReference type="MANE-Select" id="ENST00000682323.1">
    <molecule id="Q8IXQ6-2"/>
    <property type="protein sequence ID" value="ENSP00000507390.1"/>
    <property type="RefSeq nucleotide sequence ID" value="NM_001146105.2"/>
    <property type="RefSeq protein sequence ID" value="NP_001139577.1"/>
</dbReference>
<dbReference type="UCSC" id="uc003efh.5">
    <molecule id="Q8IXQ6-1"/>
    <property type="organism name" value="human"/>
</dbReference>
<dbReference type="AGR" id="HGNC:24118"/>
<dbReference type="CTD" id="83666"/>
<dbReference type="DisGeNET" id="83666"/>
<dbReference type="GeneCards" id="PARP9"/>
<dbReference type="HGNC" id="HGNC:24118">
    <property type="gene designation" value="PARP9"/>
</dbReference>
<dbReference type="HPA" id="ENSG00000138496">
    <property type="expression patterns" value="Low tissue specificity"/>
</dbReference>
<dbReference type="MIM" id="612065">
    <property type="type" value="gene"/>
</dbReference>
<dbReference type="neXtProt" id="NX_Q8IXQ6"/>
<dbReference type="OpenTargets" id="ENSG00000138496"/>
<dbReference type="PharmGKB" id="PA134870403"/>
<dbReference type="VEuPathDB" id="HostDB:ENSG00000138496"/>
<dbReference type="eggNOG" id="KOG2633">
    <property type="taxonomic scope" value="Eukaryota"/>
</dbReference>
<dbReference type="GeneTree" id="ENSGT00940000158837"/>
<dbReference type="HOGENOM" id="CLU_012160_0_0_1"/>
<dbReference type="InParanoid" id="Q8IXQ6"/>
<dbReference type="OMA" id="CTQIIVE"/>
<dbReference type="OrthoDB" id="6133115at2759"/>
<dbReference type="PAN-GO" id="Q8IXQ6">
    <property type="GO annotations" value="9 GO annotations based on evolutionary models"/>
</dbReference>
<dbReference type="PhylomeDB" id="Q8IXQ6"/>
<dbReference type="TreeFam" id="TF328965"/>
<dbReference type="PathwayCommons" id="Q8IXQ6"/>
<dbReference type="Reactome" id="R-HSA-197264">
    <property type="pathway name" value="Nicotinamide salvaging"/>
</dbReference>
<dbReference type="Reactome" id="R-HSA-9683610">
    <property type="pathway name" value="Maturation of nucleoprotein"/>
</dbReference>
<dbReference type="Reactome" id="R-HSA-9694631">
    <property type="pathway name" value="Maturation of nucleoprotein"/>
</dbReference>
<dbReference type="SABIO-RK" id="Q8IXQ6"/>
<dbReference type="SignaLink" id="Q8IXQ6"/>
<dbReference type="BioGRID-ORCS" id="83666">
    <property type="hits" value="9 hits in 1162 CRISPR screens"/>
</dbReference>
<dbReference type="ChiTaRS" id="PARP9">
    <property type="organism name" value="human"/>
</dbReference>
<dbReference type="EvolutionaryTrace" id="Q8IXQ6"/>
<dbReference type="GenomeRNAi" id="83666"/>
<dbReference type="Pharos" id="Q8IXQ6">
    <property type="development level" value="Tbio"/>
</dbReference>
<dbReference type="PRO" id="PR:Q8IXQ6"/>
<dbReference type="Proteomes" id="UP000005640">
    <property type="component" value="Chromosome 3"/>
</dbReference>
<dbReference type="RNAct" id="Q8IXQ6">
    <property type="molecule type" value="protein"/>
</dbReference>
<dbReference type="Bgee" id="ENSG00000138496">
    <property type="expression patterns" value="Expressed in monocyte and 163 other cell types or tissues"/>
</dbReference>
<dbReference type="ExpressionAtlas" id="Q8IXQ6">
    <property type="expression patterns" value="baseline and differential"/>
</dbReference>
<dbReference type="GO" id="GO:0005737">
    <property type="term" value="C:cytoplasm"/>
    <property type="evidence" value="ECO:0000314"/>
    <property type="project" value="UniProtKB"/>
</dbReference>
<dbReference type="GO" id="GO:0005829">
    <property type="term" value="C:cytosol"/>
    <property type="evidence" value="ECO:0000314"/>
    <property type="project" value="HPA"/>
</dbReference>
<dbReference type="GO" id="GO:0016020">
    <property type="term" value="C:membrane"/>
    <property type="evidence" value="ECO:0007005"/>
    <property type="project" value="UniProtKB"/>
</dbReference>
<dbReference type="GO" id="GO:0005739">
    <property type="term" value="C:mitochondrion"/>
    <property type="evidence" value="ECO:0000314"/>
    <property type="project" value="HPA"/>
</dbReference>
<dbReference type="GO" id="GO:0005654">
    <property type="term" value="C:nucleoplasm"/>
    <property type="evidence" value="ECO:0000314"/>
    <property type="project" value="HPA"/>
</dbReference>
<dbReference type="GO" id="GO:0005634">
    <property type="term" value="C:nucleus"/>
    <property type="evidence" value="ECO:0000314"/>
    <property type="project" value="UniProtKB"/>
</dbReference>
<dbReference type="GO" id="GO:0032991">
    <property type="term" value="C:protein-containing complex"/>
    <property type="evidence" value="ECO:0000314"/>
    <property type="project" value="UniProtKB"/>
</dbReference>
<dbReference type="GO" id="GO:0090734">
    <property type="term" value="C:site of DNA damage"/>
    <property type="evidence" value="ECO:0000314"/>
    <property type="project" value="UniProtKB"/>
</dbReference>
<dbReference type="GO" id="GO:0072570">
    <property type="term" value="F:ADP-D-ribose binding"/>
    <property type="evidence" value="ECO:0000315"/>
    <property type="project" value="UniProtKB"/>
</dbReference>
<dbReference type="GO" id="GO:0019899">
    <property type="term" value="F:enzyme binding"/>
    <property type="evidence" value="ECO:0000353"/>
    <property type="project" value="UniProtKB"/>
</dbReference>
<dbReference type="GO" id="GO:0004857">
    <property type="term" value="F:enzyme inhibitor activity"/>
    <property type="evidence" value="ECO:0000314"/>
    <property type="project" value="UniProtKB"/>
</dbReference>
<dbReference type="GO" id="GO:0042393">
    <property type="term" value="F:histone binding"/>
    <property type="evidence" value="ECO:0000353"/>
    <property type="project" value="UniProtKB"/>
</dbReference>
<dbReference type="GO" id="GO:0003950">
    <property type="term" value="F:NAD+ poly-ADP-ribosyltransferase activity"/>
    <property type="evidence" value="ECO:0000314"/>
    <property type="project" value="UniProtKB"/>
</dbReference>
<dbReference type="GO" id="GO:0140802">
    <property type="term" value="F:NAD+-protein-C-terminal glycine ADP-ribosyltransferase activity"/>
    <property type="evidence" value="ECO:0000314"/>
    <property type="project" value="UniProtKB"/>
</dbReference>
<dbReference type="GO" id="GO:0016779">
    <property type="term" value="F:nucleotidyltransferase activity"/>
    <property type="evidence" value="ECO:0007669"/>
    <property type="project" value="UniProtKB-KW"/>
</dbReference>
<dbReference type="GO" id="GO:0097677">
    <property type="term" value="F:STAT family protein binding"/>
    <property type="evidence" value="ECO:0000353"/>
    <property type="project" value="UniProtKB"/>
</dbReference>
<dbReference type="GO" id="GO:0003714">
    <property type="term" value="F:transcription corepressor activity"/>
    <property type="evidence" value="ECO:0000315"/>
    <property type="project" value="UniProtKB"/>
</dbReference>
<dbReference type="GO" id="GO:0044389">
    <property type="term" value="F:ubiquitin-like protein ligase binding"/>
    <property type="evidence" value="ECO:0000353"/>
    <property type="project" value="UniProtKB"/>
</dbReference>
<dbReference type="GO" id="GO:0016477">
    <property type="term" value="P:cell migration"/>
    <property type="evidence" value="ECO:0000304"/>
    <property type="project" value="UniProtKB"/>
</dbReference>
<dbReference type="GO" id="GO:0051607">
    <property type="term" value="P:defense response to virus"/>
    <property type="evidence" value="ECO:0007669"/>
    <property type="project" value="UniProtKB-KW"/>
</dbReference>
<dbReference type="GO" id="GO:0000077">
    <property type="term" value="P:DNA damage checkpoint signaling"/>
    <property type="evidence" value="ECO:0000315"/>
    <property type="project" value="UniProtKB"/>
</dbReference>
<dbReference type="GO" id="GO:0006302">
    <property type="term" value="P:double-strand break repair"/>
    <property type="evidence" value="ECO:0000315"/>
    <property type="project" value="UniProtKB"/>
</dbReference>
<dbReference type="GO" id="GO:0045087">
    <property type="term" value="P:innate immune response"/>
    <property type="evidence" value="ECO:0007669"/>
    <property type="project" value="UniProtKB-KW"/>
</dbReference>
<dbReference type="GO" id="GO:0043086">
    <property type="term" value="P:negative regulation of catalytic activity"/>
    <property type="evidence" value="ECO:0000314"/>
    <property type="project" value="UniProtKB"/>
</dbReference>
<dbReference type="GO" id="GO:0010629">
    <property type="term" value="P:negative regulation of gene expression"/>
    <property type="evidence" value="ECO:0000315"/>
    <property type="project" value="UniProtKB"/>
</dbReference>
<dbReference type="GO" id="GO:0000122">
    <property type="term" value="P:negative regulation of transcription by RNA polymerase II"/>
    <property type="evidence" value="ECO:0000315"/>
    <property type="project" value="UniProtKB"/>
</dbReference>
<dbReference type="GO" id="GO:0035563">
    <property type="term" value="P:positive regulation of chromatin binding"/>
    <property type="evidence" value="ECO:0000316"/>
    <property type="project" value="UniProtKB"/>
</dbReference>
<dbReference type="GO" id="GO:0002230">
    <property type="term" value="P:positive regulation of defense response to virus by host"/>
    <property type="evidence" value="ECO:0000316"/>
    <property type="project" value="UniProtKB"/>
</dbReference>
<dbReference type="GO" id="GO:0045893">
    <property type="term" value="P:positive regulation of DNA-templated transcription"/>
    <property type="evidence" value="ECO:0000316"/>
    <property type="project" value="UniProtKB"/>
</dbReference>
<dbReference type="GO" id="GO:1900182">
    <property type="term" value="P:positive regulation of protein localization to nucleus"/>
    <property type="evidence" value="ECO:0000316"/>
    <property type="project" value="UniProtKB"/>
</dbReference>
<dbReference type="GO" id="GO:0060335">
    <property type="term" value="P:positive regulation of type II interferon-mediated signaling pathway"/>
    <property type="evidence" value="ECO:0000315"/>
    <property type="project" value="UniProtKB"/>
</dbReference>
<dbReference type="GO" id="GO:0042531">
    <property type="term" value="P:positive regulation of tyrosine phosphorylation of STAT protein"/>
    <property type="evidence" value="ECO:0000315"/>
    <property type="project" value="UniProtKB"/>
</dbReference>
<dbReference type="GO" id="GO:0010608">
    <property type="term" value="P:post-transcriptional regulation of gene expression"/>
    <property type="evidence" value="ECO:0000315"/>
    <property type="project" value="UniProtKB"/>
</dbReference>
<dbReference type="GO" id="GO:0060330">
    <property type="term" value="P:regulation of response to type II interferon"/>
    <property type="evidence" value="ECO:0000314"/>
    <property type="project" value="UniProtKB"/>
</dbReference>
<dbReference type="GO" id="GO:0019082">
    <property type="term" value="P:viral protein processing"/>
    <property type="evidence" value="ECO:0000304"/>
    <property type="project" value="Reactome"/>
</dbReference>
<dbReference type="CDD" id="cd02907">
    <property type="entry name" value="Macro_Af1521_BAL-like"/>
    <property type="match status" value="1"/>
</dbReference>
<dbReference type="CDD" id="cd02903">
    <property type="entry name" value="Macro_BAL-like"/>
    <property type="match status" value="1"/>
</dbReference>
<dbReference type="CDD" id="cd01439">
    <property type="entry name" value="TCCD_inducible_PARP_like"/>
    <property type="match status" value="1"/>
</dbReference>
<dbReference type="FunFam" id="3.40.220.10:FF:000010">
    <property type="entry name" value="Poly [ADP-ribose] polymerase"/>
    <property type="match status" value="1"/>
</dbReference>
<dbReference type="FunFam" id="3.90.228.10:FF:000011">
    <property type="entry name" value="Poly(ADP-ribose) polymerase family member 9"/>
    <property type="match status" value="1"/>
</dbReference>
<dbReference type="FunFam" id="3.40.220.10:FF:000012">
    <property type="entry name" value="Protein mono-ADP-ribosyltransferase PARP9"/>
    <property type="match status" value="1"/>
</dbReference>
<dbReference type="Gene3D" id="3.90.228.10">
    <property type="match status" value="1"/>
</dbReference>
<dbReference type="Gene3D" id="3.40.220.10">
    <property type="entry name" value="Leucine Aminopeptidase, subunit E, domain 1"/>
    <property type="match status" value="2"/>
</dbReference>
<dbReference type="InterPro" id="IPR002589">
    <property type="entry name" value="Macro_dom"/>
</dbReference>
<dbReference type="InterPro" id="IPR043472">
    <property type="entry name" value="Macro_dom-like"/>
</dbReference>
<dbReference type="InterPro" id="IPR052056">
    <property type="entry name" value="Mono-ARTD/PARP"/>
</dbReference>
<dbReference type="InterPro" id="IPR057049">
    <property type="entry name" value="PARP14_KH_8"/>
</dbReference>
<dbReference type="InterPro" id="IPR012317">
    <property type="entry name" value="Poly(ADP-ribose)pol_cat_dom"/>
</dbReference>
<dbReference type="PANTHER" id="PTHR14453">
    <property type="entry name" value="PARP/ZINC FINGER CCCH TYPE DOMAIN CONTAINING PROTEIN"/>
    <property type="match status" value="1"/>
</dbReference>
<dbReference type="PANTHER" id="PTHR14453:SF70">
    <property type="entry name" value="PROTEIN MONO-ADP-RIBOSYLTRANSFERASE PARP9"/>
    <property type="match status" value="1"/>
</dbReference>
<dbReference type="Pfam" id="PF23254">
    <property type="entry name" value="KH_PARP14_8"/>
    <property type="match status" value="1"/>
</dbReference>
<dbReference type="Pfam" id="PF01661">
    <property type="entry name" value="Macro"/>
    <property type="match status" value="2"/>
</dbReference>
<dbReference type="SMART" id="SM00506">
    <property type="entry name" value="A1pp"/>
    <property type="match status" value="2"/>
</dbReference>
<dbReference type="SUPFAM" id="SSF56399">
    <property type="entry name" value="ADP-ribosylation"/>
    <property type="match status" value="1"/>
</dbReference>
<dbReference type="SUPFAM" id="SSF52949">
    <property type="entry name" value="Macro domain-like"/>
    <property type="match status" value="2"/>
</dbReference>
<dbReference type="PROSITE" id="PS51154">
    <property type="entry name" value="MACRO"/>
    <property type="match status" value="2"/>
</dbReference>
<dbReference type="PROSITE" id="PS51059">
    <property type="entry name" value="PARP_CATALYTIC"/>
    <property type="match status" value="1"/>
</dbReference>
<gene>
    <name type="primary">PARP9</name>
    <name evidence="13" type="synonym">BAL</name>
    <name evidence="13" type="synonym">BAL1</name>
</gene>
<sequence length="854" mass="96343">MDFSMVAGAAAYNEKSGRITSLSLLFQKVFAQIFPQWRKGNTEECLPYKCSETGALGENYSWQIPINHNDFKILKNNERQLCEVLQNKFGCISTLVSPVQEGNSKSLQVFRKMLTPRIELSVWKDDLTTHAVDAVVNAANEDLLHGGGLALALVKAGGFEIQEESKQFVARYGKVSAGEIAVTGAGRLPCKQIIHAVGPRWMEWDKQGCTGKLQRAIVSILNYVIYKNTHIKTVAIPALSSGIFQFPLNLCTKTIVETIRVSLQGKPMMSNLKEIHLVSNEDPTVAAFKAASEFILGKSELGQETTPSFNAMVVNNLTLQIVQGHIEWQTADVIVNSVNPHDITVGPVAKSILQQAGVEMKSEFLATKAKQFQRSQLVLVTKGFNLFCKYIYHVLWHSEFPKPQILKHAMKECLEKCIEQNITSISFPALGTGNMEIKKETAAEILFDEVLTFAKDHVKHQLTVKFVIFPTDLEIYKAFSSEMAKRSKMLSLNNYSVPQSTREEKRENGLEARSPAINLMGFNVEEMYEAHAWIQRILSLQNHHIIENNHILYLGRKEHDILSQLQKTSSVSITEIISPGRTELEIEGARADLIEVVMNIEDMLCKVQEEMARKKERGLWRSLGQWTIQQQKTQDEMKENIIFLKCPVPPTQELLDQKKQFEKCGLQVLKVEKIDNEVLMAAFQRKKKMMEEKLHRQPVSHRLFQQVPYQFCNVVCRVGFQRMYSTPCDPKYGAGIYFTKNLKNLAEKAKKISAADKLIYVFEAEVLTGFFCQGHPLNIVPPPLSPGAIDGHDSVVDNVSSPETFVIFSGMQAIPQYLWTCTQEYVQSQDYSSGPMRPFAQHPWRGFASGSPVD</sequence>
<protein>
    <recommendedName>
        <fullName evidence="16">Protein mono-ADP-ribosyltransferase PARP9</fullName>
        <ecNumber evidence="12">2.4.2.-</ecNumber>
    </recommendedName>
    <alternativeName>
        <fullName>ADP-ribosyltransferase diphtheria toxin-like 9</fullName>
        <shortName>ARTD9</shortName>
    </alternativeName>
    <alternativeName>
        <fullName evidence="13">B aggressive lymphoma protein</fullName>
    </alternativeName>
    <alternativeName>
        <fullName>Poly [ADP-ribose] polymerase 9</fullName>
        <shortName>PARP-9</shortName>
    </alternativeName>
</protein>
<comment type="function">
    <text evidence="1 8 9 10 11 12">ADP-ribosyltransferase which, in association with E3 ligase DTX3L, plays a role in DNA damage repair and in immune responses including interferon-mediated antiviral defenses (PubMed:16809771, PubMed:23230272, PubMed:26479788, PubMed:27796300). Within the complex, enhances DTX3L E3 ligase activity which is further enhanced by PARP9 binding to poly(ADP-ribose) (PubMed:28525742). In association with DTX3L and in presence of E1 and E2 enzymes, mediates NAD(+)-dependent mono-ADP-ribosylation of ubiquitin which prevents ubiquitin conjugation to substrates such as histones (PubMed:28525742). During DNA repair, PARP1 recruits PARP9/BAL1-DTX3L complex to DNA damage sites via PARP9 binding to ribosylated PARP1 (PubMed:23230272). Subsequent PARP1-dependent PARP9/BAL1-DTX3L-mediated ubiquitination promotes the rapid and specific recruitment of 53BP1/TP53BP1, UIMC1/RAP80, and BRCA1 to DNA damage sites (PubMed:23230272, PubMed:28525742). In response to DNA damage, PARP9-DTX3L complex is required for efficient non-homologous end joining (NHEJ); the complex function is negatively modulated by PARP9 activity (PubMed:28525742). Dispensable for B-cell receptor (BCR) assembly through V(D)J recombination and class switch recombination (CSR) (By similarity). In macrophages, positively regulates pro-inflammatory cytokines production in response to IFNG stimulation by suppressing PARP14-mediated STAT1 ADP-ribosylation and thus promoting STAT1 phosphorylation (PubMed:27796300). Also suppresses PARP14-mediated STAT6 ADP-ribosylation (PubMed:27796300).</text>
</comment>
<comment type="catalytic activity">
    <reaction evidence="12">
        <text>[protein]-C-terminal glycine + NAD(+) = [protein]-C-terminal O-(ADP-D-ribosyl)-glycine + nicotinamide</text>
        <dbReference type="Rhea" id="RHEA:58268"/>
        <dbReference type="Rhea" id="RHEA-COMP:15093"/>
        <dbReference type="Rhea" id="RHEA-COMP:15095"/>
        <dbReference type="ChEBI" id="CHEBI:17154"/>
        <dbReference type="ChEBI" id="CHEBI:57540"/>
        <dbReference type="ChEBI" id="CHEBI:83148"/>
        <dbReference type="ChEBI" id="CHEBI:142558"/>
    </reaction>
    <physiologicalReaction direction="left-to-right" evidence="12">
        <dbReference type="Rhea" id="RHEA:58269"/>
    </physiologicalReaction>
</comment>
<comment type="activity regulation">
    <text evidence="12">Binding to poly(ADP-ribose) does not affect its activity.</text>
</comment>
<comment type="biophysicochemical properties">
    <kinetics>
        <KM evidence="12">196 uM for NAD(+)</KM>
    </kinetics>
</comment>
<comment type="subunit">
    <text evidence="5 9 10 11 12">Forms a stable complex with E3 ligase DTX3L; the interaction is required for PARP9 mediated ADP-ribosylation of ubiquitin (PubMed:12670957, PubMed:28525742). Interacts (via PARP catalytic domain) with DTX3L (via N-terminus) (PubMed:26479788). Forms a complex with STAT1 and DTX3L independently of IFNB1 or IFNG-mediated STAT1 'Tyr-701' phosphorylation (PubMed:26479788). Forms a complex with STAT1, DTX3L and histone H2B H2BC9/H2BJ; the interaction is likely to induce H2BC9/H2BJ ubiquitination (PubMed:26479788). Interacts (via N-terminus) with STAT1 (PubMed:26479788). Interacts with PARP14 in IFNG-stimulated macrophages; the interaction prevents PARP14-mediated STAT1 and STAT6 ADP-riboslylation (PubMed:27796300). Interacts with PARP1 (when poly-ADP-ribosylated) (PubMed:23230272).</text>
</comment>
<comment type="subcellular location">
    <subcellularLocation>
        <location evidence="8 10 11">Cytoplasm</location>
        <location evidence="8 10 11">Cytosol</location>
    </subcellularLocation>
    <subcellularLocation>
        <location evidence="4 8 9 10 12">Nucleus</location>
    </subcellularLocation>
    <text evidence="8 9 10 12">Shuttles between the nucleus and the cytosol (PubMed:16809771). Translocates to the nucleus in response to IFNG or IFNB1 stimulation (PubMed:26479788). Export to the cytosol depends on the interaction with DTX3L (PubMed:16809771). Localizes at sites of DNA damage in a PARP1-dependent manner (PubMed:23230272, PubMed:28525742).</text>
</comment>
<comment type="alternative products">
    <event type="alternative splicing"/>
    <isoform>
        <id>Q8IXQ6-1</id>
        <name>1</name>
        <name>Long</name>
        <name>L</name>
        <sequence type="displayed"/>
    </isoform>
    <isoform>
        <id>Q8IXQ6-2</id>
        <name>2</name>
        <name>Short</name>
        <name>S</name>
        <sequence type="described" ref="VSP_008505"/>
    </isoform>
    <isoform>
        <id>Q8IXQ6-3</id>
        <name>3</name>
        <sequence type="described" ref="VSP_008505 VSP_046086 VSP_046087"/>
    </isoform>
</comment>
<comment type="tissue specificity">
    <text evidence="4 8 11">Expressed in lymphocyte-rich tissues, spleen, lymph nodes, peripheral blood lymphocytes and colonic mucosa (PubMed:11110709, PubMed:16809771). Expressed in macrophages (PubMed:27796300). Also expressed in nonhematopoietic tissues such as heart and skeletal muscle (PubMed:11110709, PubMed:16809771). Isoform 2 is the predominant form (PubMed:11110709). Most abundantly expressed in lymphomas with a brisk host inflammatory response (PubMed:11110709, PubMed:16809771). In diffuse large B-cell lymphomas tumors, expressed specifically by malignant B-cells (PubMed:11110709, PubMed:16809771).</text>
</comment>
<comment type="induction">
    <text evidence="8 10 11">Up-regulated by IFNG in macrophages and in B-cell lymphoma cell lines (PubMed:16809771, PubMed:26479788, PubMed:27796300). Up-regulated by IFNB1 or viral infection (PubMed:26479788). Down-regulated by IL4 in macrophages (PubMed:27796300).</text>
</comment>
<comment type="domain">
    <text evidence="9 10 12">Macro domains 1 and 2 may be involved in the binding to poly(ADP-ribose) (PubMed:26479788, PubMed:28525742). Macro domain 2 is required for recruitment to DNA damage sites (PubMed:23230272). Macro domains 1 and 2 are probably dispensable for the interaction with STAT1 and DTX3L and for STAT1 phosphorylation (PubMed:26479788).</text>
</comment>
<comment type="PTM">
    <text evidence="11">ADP-ribosylated by PARP14.</text>
</comment>
<comment type="disease">
    <text evidence="4">Overexpressed at significantly higher levels in fatal high-risk diffuse large B-cell lymphomas (DLB-CL) compared to cured low-risk tumors. Overexpression in B-cell lymphoma transfectants may promote malignant B-cell migration. May therefore be involved in promoting B-cell migration and dissemination of high-risk DLB-CL tumors (PubMed:11110709).</text>
</comment>
<comment type="similarity">
    <text evidence="16">Belongs to the ARTD/PARP family.</text>
</comment>
<feature type="chain" id="PRO_0000211339" description="Protein mono-ADP-ribosyltransferase PARP9">
    <location>
        <begin position="1"/>
        <end position="854"/>
    </location>
</feature>
<feature type="domain" description="Macro 1" evidence="3">
    <location>
        <begin position="107"/>
        <end position="296"/>
    </location>
</feature>
<feature type="domain" description="Macro 2" evidence="3">
    <location>
        <begin position="306"/>
        <end position="487"/>
    </location>
</feature>
<feature type="domain" description="PARP catalytic" evidence="2">
    <location>
        <begin position="628"/>
        <end position="850"/>
    </location>
</feature>
<feature type="splice variant" id="VSP_008505" description="In isoform 2 and isoform 3." evidence="13 14 15">
    <location>
        <begin position="17"/>
        <end position="51"/>
    </location>
</feature>
<feature type="splice variant" id="VSP_046086" description="In isoform 3." evidence="15">
    <original>DPKYGAGIYFTKNLKNL</original>
    <variation>GRCQCLIIGATLWNLVS</variation>
    <location>
        <begin position="729"/>
        <end position="745"/>
    </location>
</feature>
<feature type="splice variant" id="VSP_046087" description="In isoform 3." evidence="15">
    <location>
        <begin position="746"/>
        <end position="854"/>
    </location>
</feature>
<feature type="sequence variant" id="VAR_056654" description="In dbSNP:rs34006803.">
    <original>S</original>
    <variation>L</variation>
    <location>
        <position position="21"/>
    </location>
</feature>
<feature type="sequence variant" id="VAR_056655" description="In dbSNP:rs28365795." evidence="7">
    <original>I</original>
    <variation>V</variation>
    <location>
        <position position="517"/>
    </location>
</feature>
<feature type="sequence variant" id="VAR_056656" description="In dbSNP:rs9851180." evidence="4 6 7">
    <original>Y</original>
    <variation>C</variation>
    <location>
        <position position="528"/>
    </location>
</feature>
<feature type="sequence variant" id="VAR_056657" description="In dbSNP:rs6780543.">
    <original>T</original>
    <variation>A</variation>
    <location>
        <position position="651"/>
    </location>
</feature>
<feature type="mutagenesis site" description="Reduces the binding to poly(ADP-ribose) by 50 percent and prevents increase in DTX3L-mediated histone ubiquitination without affecting ubiquitin ADP ribosylation, interaction with DTX3L and STAT1 and DTX3L catalytic activity; when associated with E-346." evidence="10 12">
    <original>G</original>
    <variation>E</variation>
    <location>
        <position position="147"/>
    </location>
</feature>
<feature type="mutagenesis site" description="Reduces the binding to poly(ADP-ribose) by 50 percent and prevents increase in DTX3L-mediated histone ubiquitination without affecting ubiquitin ADP ribosylation, interaction with DTX3L and STAT1 and DTX3L catalytic activity; when associated with E-147." evidence="10 12">
    <original>G</original>
    <variation>E</variation>
    <location>
        <position position="346"/>
    </location>
</feature>
<feature type="mutagenesis site" description="Loss of ADP ribosylation activity and interaction with DTX3L." evidence="12">
    <location>
        <begin position="719"/>
        <end position="722"/>
    </location>
</feature>
<feature type="mutagenesis site" description="No defect in ubiquitin ADP ribosylation and the interaction with DTX3L." evidence="12">
    <original>Y</original>
    <variation>A</variation>
    <location>
        <position position="737"/>
    </location>
</feature>
<feature type="mutagenesis site" description="Severe reduction in ubiquitin ADP ribosylation. No effect on the interaction with DTX3L and on DTX3L E3 ligase activity. Increases DNA repair." evidence="12">
    <original>F</original>
    <variation>K</variation>
    <location>
        <position position="738"/>
    </location>
</feature>
<feature type="mutagenesis site" description="Loss of ADP ribosylation activity and interaction with DTX3L." evidence="12">
    <location>
        <begin position="766"/>
        <end position="769"/>
    </location>
</feature>
<feature type="mutagenesis site" description="Reduces ADP ribosylation activity and interaction with DTX3L." evidence="12">
    <location>
        <begin position="780"/>
        <end position="784"/>
    </location>
</feature>
<feature type="mutagenesis site" description="No defect in ADP ribosylation and interaction with DTX3L." evidence="12">
    <original>PE</original>
    <variation>AA</variation>
    <location>
        <begin position="802"/>
        <end position="803"/>
    </location>
</feature>
<feature type="mutagenesis site" description="No defect in ADP ribosylation and interaction with DTX3L." evidence="12">
    <location>
        <begin position="831"/>
        <end position="854"/>
    </location>
</feature>
<feature type="sequence conflict" description="In Ref. 2; BAF85648." evidence="16" ref="2">
    <original>S</original>
    <variation>P</variation>
    <location>
        <position position="487"/>
    </location>
</feature>
<feature type="sequence conflict" description="In Ref. 2; BAG36276." evidence="16" ref="2">
    <original>F</original>
    <variation>S</variation>
    <location>
        <position position="839"/>
    </location>
</feature>
<feature type="strand" evidence="17">
    <location>
        <begin position="311"/>
        <end position="314"/>
    </location>
</feature>
<feature type="strand" evidence="17">
    <location>
        <begin position="317"/>
        <end position="324"/>
    </location>
</feature>
<feature type="helix" evidence="17">
    <location>
        <begin position="326"/>
        <end position="328"/>
    </location>
</feature>
<feature type="strand" evidence="17">
    <location>
        <begin position="330"/>
        <end position="339"/>
    </location>
</feature>
<feature type="helix" evidence="17">
    <location>
        <begin position="347"/>
        <end position="356"/>
    </location>
</feature>
<feature type="helix" evidence="17">
    <location>
        <begin position="358"/>
        <end position="370"/>
    </location>
</feature>
<feature type="strand" evidence="17">
    <location>
        <begin position="378"/>
        <end position="382"/>
    </location>
</feature>
<feature type="strand" evidence="17">
    <location>
        <begin position="386"/>
        <end position="395"/>
    </location>
</feature>
<feature type="helix" evidence="17">
    <location>
        <begin position="402"/>
        <end position="419"/>
    </location>
</feature>
<feature type="strand" evidence="17">
    <location>
        <begin position="423"/>
        <end position="427"/>
    </location>
</feature>
<feature type="strand" evidence="17">
    <location>
        <begin position="433"/>
        <end position="437"/>
    </location>
</feature>
<feature type="helix" evidence="17">
    <location>
        <begin position="439"/>
        <end position="456"/>
    </location>
</feature>
<feature type="strand" evidence="17">
    <location>
        <begin position="462"/>
        <end position="468"/>
    </location>
</feature>
<feature type="helix" evidence="17">
    <location>
        <begin position="473"/>
        <end position="490"/>
    </location>
</feature>
<keyword id="KW-0002">3D-structure</keyword>
<keyword id="KW-0013">ADP-ribosylation</keyword>
<keyword id="KW-0025">Alternative splicing</keyword>
<keyword id="KW-0051">Antiviral defense</keyword>
<keyword id="KW-0963">Cytoplasm</keyword>
<keyword id="KW-0227">DNA damage</keyword>
<keyword id="KW-0234">DNA repair</keyword>
<keyword id="KW-0328">Glycosyltransferase</keyword>
<keyword id="KW-0391">Immunity</keyword>
<keyword id="KW-0399">Innate immunity</keyword>
<keyword id="KW-0520">NAD</keyword>
<keyword id="KW-0548">Nucleotidyltransferase</keyword>
<keyword id="KW-0539">Nucleus</keyword>
<keyword id="KW-1267">Proteomics identification</keyword>
<keyword id="KW-1185">Reference proteome</keyword>
<keyword id="KW-0677">Repeat</keyword>
<keyword id="KW-0808">Transferase</keyword>
<name>PARP9_HUMAN</name>
<proteinExistence type="evidence at protein level"/>
<reference key="1">
    <citation type="journal article" date="2000" name="Blood">
        <title>BAL is a novel risk-related gene in diffuse large B-cell lymphomas that enhances cellular migration.</title>
        <authorList>
            <person name="Aguiar R.C.T."/>
            <person name="Yakushijin Y."/>
            <person name="Kharbanda S."/>
            <person name="Salgia R."/>
            <person name="Fletcher J.A."/>
            <person name="Shipp M.A."/>
        </authorList>
    </citation>
    <scope>NUCLEOTIDE SEQUENCE [MRNA] (ISOFORMS 1 AND 2)</scope>
    <scope>SUBCELLULAR LOCATION</scope>
    <scope>TISSUE SPECIFICITY</scope>
    <scope>VARIANT CYS-528</scope>
    <scope>INVOLVEMENT IN B-CELL LYMPHOMAS</scope>
    <source>
        <tissue>B-cell</tissue>
    </source>
</reference>
<reference key="2">
    <citation type="journal article" date="2004" name="Nat. Genet.">
        <title>Complete sequencing and characterization of 21,243 full-length human cDNAs.</title>
        <authorList>
            <person name="Ota T."/>
            <person name="Suzuki Y."/>
            <person name="Nishikawa T."/>
            <person name="Otsuki T."/>
            <person name="Sugiyama T."/>
            <person name="Irie R."/>
            <person name="Wakamatsu A."/>
            <person name="Hayashi K."/>
            <person name="Sato H."/>
            <person name="Nagai K."/>
            <person name="Kimura K."/>
            <person name="Makita H."/>
            <person name="Sekine M."/>
            <person name="Obayashi M."/>
            <person name="Nishi T."/>
            <person name="Shibahara T."/>
            <person name="Tanaka T."/>
            <person name="Ishii S."/>
            <person name="Yamamoto J."/>
            <person name="Saito K."/>
            <person name="Kawai Y."/>
            <person name="Isono Y."/>
            <person name="Nakamura Y."/>
            <person name="Nagahari K."/>
            <person name="Murakami K."/>
            <person name="Yasuda T."/>
            <person name="Iwayanagi T."/>
            <person name="Wagatsuma M."/>
            <person name="Shiratori A."/>
            <person name="Sudo H."/>
            <person name="Hosoiri T."/>
            <person name="Kaku Y."/>
            <person name="Kodaira H."/>
            <person name="Kondo H."/>
            <person name="Sugawara M."/>
            <person name="Takahashi M."/>
            <person name="Kanda K."/>
            <person name="Yokoi T."/>
            <person name="Furuya T."/>
            <person name="Kikkawa E."/>
            <person name="Omura Y."/>
            <person name="Abe K."/>
            <person name="Kamihara K."/>
            <person name="Katsuta N."/>
            <person name="Sato K."/>
            <person name="Tanikawa M."/>
            <person name="Yamazaki M."/>
            <person name="Ninomiya K."/>
            <person name="Ishibashi T."/>
            <person name="Yamashita H."/>
            <person name="Murakawa K."/>
            <person name="Fujimori K."/>
            <person name="Tanai H."/>
            <person name="Kimata M."/>
            <person name="Watanabe M."/>
            <person name="Hiraoka S."/>
            <person name="Chiba Y."/>
            <person name="Ishida S."/>
            <person name="Ono Y."/>
            <person name="Takiguchi S."/>
            <person name="Watanabe S."/>
            <person name="Yosida M."/>
            <person name="Hotuta T."/>
            <person name="Kusano J."/>
            <person name="Kanehori K."/>
            <person name="Takahashi-Fujii A."/>
            <person name="Hara H."/>
            <person name="Tanase T.-O."/>
            <person name="Nomura Y."/>
            <person name="Togiya S."/>
            <person name="Komai F."/>
            <person name="Hara R."/>
            <person name="Takeuchi K."/>
            <person name="Arita M."/>
            <person name="Imose N."/>
            <person name="Musashino K."/>
            <person name="Yuuki H."/>
            <person name="Oshima A."/>
            <person name="Sasaki N."/>
            <person name="Aotsuka S."/>
            <person name="Yoshikawa Y."/>
            <person name="Matsunawa H."/>
            <person name="Ichihara T."/>
            <person name="Shiohata N."/>
            <person name="Sano S."/>
            <person name="Moriya S."/>
            <person name="Momiyama H."/>
            <person name="Satoh N."/>
            <person name="Takami S."/>
            <person name="Terashima Y."/>
            <person name="Suzuki O."/>
            <person name="Nakagawa S."/>
            <person name="Senoh A."/>
            <person name="Mizoguchi H."/>
            <person name="Goto Y."/>
            <person name="Shimizu F."/>
            <person name="Wakebe H."/>
            <person name="Hishigaki H."/>
            <person name="Watanabe T."/>
            <person name="Sugiyama A."/>
            <person name="Takemoto M."/>
            <person name="Kawakami B."/>
            <person name="Yamazaki M."/>
            <person name="Watanabe K."/>
            <person name="Kumagai A."/>
            <person name="Itakura S."/>
            <person name="Fukuzumi Y."/>
            <person name="Fujimori Y."/>
            <person name="Komiyama M."/>
            <person name="Tashiro H."/>
            <person name="Tanigami A."/>
            <person name="Fujiwara T."/>
            <person name="Ono T."/>
            <person name="Yamada K."/>
            <person name="Fujii Y."/>
            <person name="Ozaki K."/>
            <person name="Hirao M."/>
            <person name="Ohmori Y."/>
            <person name="Kawabata A."/>
            <person name="Hikiji T."/>
            <person name="Kobatake N."/>
            <person name="Inagaki H."/>
            <person name="Ikema Y."/>
            <person name="Okamoto S."/>
            <person name="Okitani R."/>
            <person name="Kawakami T."/>
            <person name="Noguchi S."/>
            <person name="Itoh T."/>
            <person name="Shigeta K."/>
            <person name="Senba T."/>
            <person name="Matsumura K."/>
            <person name="Nakajima Y."/>
            <person name="Mizuno T."/>
            <person name="Morinaga M."/>
            <person name="Sasaki M."/>
            <person name="Togashi T."/>
            <person name="Oyama M."/>
            <person name="Hata H."/>
            <person name="Watanabe M."/>
            <person name="Komatsu T."/>
            <person name="Mizushima-Sugano J."/>
            <person name="Satoh T."/>
            <person name="Shirai Y."/>
            <person name="Takahashi Y."/>
            <person name="Nakagawa K."/>
            <person name="Okumura K."/>
            <person name="Nagase T."/>
            <person name="Nomura N."/>
            <person name="Kikuchi H."/>
            <person name="Masuho Y."/>
            <person name="Yamashita R."/>
            <person name="Nakai K."/>
            <person name="Yada T."/>
            <person name="Nakamura Y."/>
            <person name="Ohara O."/>
            <person name="Isogai T."/>
            <person name="Sugano S."/>
        </authorList>
    </citation>
    <scope>NUCLEOTIDE SEQUENCE [LARGE SCALE MRNA] (ISOFORMS 1 AND 2)</scope>
    <scope>VARIANT CYS-528</scope>
    <source>
        <tissue>Trachea</tissue>
        <tissue>Umbilical cord blood</tissue>
    </source>
</reference>
<reference key="3">
    <citation type="journal article" date="2006" name="Nature">
        <title>The DNA sequence, annotation and analysis of human chromosome 3.</title>
        <authorList>
            <person name="Muzny D.M."/>
            <person name="Scherer S.E."/>
            <person name="Kaul R."/>
            <person name="Wang J."/>
            <person name="Yu J."/>
            <person name="Sudbrak R."/>
            <person name="Buhay C.J."/>
            <person name="Chen R."/>
            <person name="Cree A."/>
            <person name="Ding Y."/>
            <person name="Dugan-Rocha S."/>
            <person name="Gill R."/>
            <person name="Gunaratne P."/>
            <person name="Harris R.A."/>
            <person name="Hawes A.C."/>
            <person name="Hernandez J."/>
            <person name="Hodgson A.V."/>
            <person name="Hume J."/>
            <person name="Jackson A."/>
            <person name="Khan Z.M."/>
            <person name="Kovar-Smith C."/>
            <person name="Lewis L.R."/>
            <person name="Lozado R.J."/>
            <person name="Metzker M.L."/>
            <person name="Milosavljevic A."/>
            <person name="Miner G.R."/>
            <person name="Morgan M.B."/>
            <person name="Nazareth L.V."/>
            <person name="Scott G."/>
            <person name="Sodergren E."/>
            <person name="Song X.-Z."/>
            <person name="Steffen D."/>
            <person name="Wei S."/>
            <person name="Wheeler D.A."/>
            <person name="Wright M.W."/>
            <person name="Worley K.C."/>
            <person name="Yuan Y."/>
            <person name="Zhang Z."/>
            <person name="Adams C.Q."/>
            <person name="Ansari-Lari M.A."/>
            <person name="Ayele M."/>
            <person name="Brown M.J."/>
            <person name="Chen G."/>
            <person name="Chen Z."/>
            <person name="Clendenning J."/>
            <person name="Clerc-Blankenburg K.P."/>
            <person name="Chen R."/>
            <person name="Chen Z."/>
            <person name="Davis C."/>
            <person name="Delgado O."/>
            <person name="Dinh H.H."/>
            <person name="Dong W."/>
            <person name="Draper H."/>
            <person name="Ernst S."/>
            <person name="Fu G."/>
            <person name="Gonzalez-Garay M.L."/>
            <person name="Garcia D.K."/>
            <person name="Gillett W."/>
            <person name="Gu J."/>
            <person name="Hao B."/>
            <person name="Haugen E."/>
            <person name="Havlak P."/>
            <person name="He X."/>
            <person name="Hennig S."/>
            <person name="Hu S."/>
            <person name="Huang W."/>
            <person name="Jackson L.R."/>
            <person name="Jacob L.S."/>
            <person name="Kelly S.H."/>
            <person name="Kube M."/>
            <person name="Levy R."/>
            <person name="Li Z."/>
            <person name="Liu B."/>
            <person name="Liu J."/>
            <person name="Liu W."/>
            <person name="Lu J."/>
            <person name="Maheshwari M."/>
            <person name="Nguyen B.-V."/>
            <person name="Okwuonu G.O."/>
            <person name="Palmeiri A."/>
            <person name="Pasternak S."/>
            <person name="Perez L.M."/>
            <person name="Phelps K.A."/>
            <person name="Plopper F.J."/>
            <person name="Qiang B."/>
            <person name="Raymond C."/>
            <person name="Rodriguez R."/>
            <person name="Saenphimmachak C."/>
            <person name="Santibanez J."/>
            <person name="Shen H."/>
            <person name="Shen Y."/>
            <person name="Subramanian S."/>
            <person name="Tabor P.E."/>
            <person name="Verduzco D."/>
            <person name="Waldron L."/>
            <person name="Wang J."/>
            <person name="Wang J."/>
            <person name="Wang Q."/>
            <person name="Williams G.A."/>
            <person name="Wong G.K.-S."/>
            <person name="Yao Z."/>
            <person name="Zhang J."/>
            <person name="Zhang X."/>
            <person name="Zhao G."/>
            <person name="Zhou J."/>
            <person name="Zhou Y."/>
            <person name="Nelson D."/>
            <person name="Lehrach H."/>
            <person name="Reinhardt R."/>
            <person name="Naylor S.L."/>
            <person name="Yang H."/>
            <person name="Olson M."/>
            <person name="Weinstock G."/>
            <person name="Gibbs R.A."/>
        </authorList>
    </citation>
    <scope>NUCLEOTIDE SEQUENCE [LARGE SCALE GENOMIC DNA]</scope>
</reference>
<reference key="4">
    <citation type="journal article" date="2004" name="Genome Res.">
        <title>The status, quality, and expansion of the NIH full-length cDNA project: the Mammalian Gene Collection (MGC).</title>
        <authorList>
            <consortium name="The MGC Project Team"/>
        </authorList>
    </citation>
    <scope>NUCLEOTIDE SEQUENCE [LARGE SCALE MRNA] (ISOFORMS 2 AND 3)</scope>
    <scope>VARIANTS VAL-517 AND CYS-528</scope>
    <source>
        <tissue>Mammary gland</tissue>
        <tissue>Melanoma</tissue>
    </source>
</reference>
<reference key="5">
    <citation type="journal article" date="2007" name="BMC Genomics">
        <title>The full-ORF clone resource of the German cDNA consortium.</title>
        <authorList>
            <person name="Bechtel S."/>
            <person name="Rosenfelder H."/>
            <person name="Duda A."/>
            <person name="Schmidt C.P."/>
            <person name="Ernst U."/>
            <person name="Wellenreuther R."/>
            <person name="Mehrle A."/>
            <person name="Schuster C."/>
            <person name="Bahr A."/>
            <person name="Bloecker H."/>
            <person name="Heubner D."/>
            <person name="Hoerlein A."/>
            <person name="Michel G."/>
            <person name="Wedler H."/>
            <person name="Koehrer K."/>
            <person name="Ottenwaelder B."/>
            <person name="Poustka A."/>
            <person name="Wiemann S."/>
            <person name="Schupp I."/>
        </authorList>
    </citation>
    <scope>NUCLEOTIDE SEQUENCE [LARGE SCALE MRNA] OF 525-854</scope>
    <source>
        <tissue>Amygdala</tissue>
    </source>
</reference>
<reference key="6">
    <citation type="journal article" date="2003" name="J. Biol. Chem.">
        <title>The BAL-binding protein BBAP and related Deltex family members exhibit ubiquitin-protein isopeptide ligase activity.</title>
        <authorList>
            <person name="Takeyama K."/>
            <person name="Aguiar R.C.T."/>
            <person name="Gu L."/>
            <person name="He C."/>
            <person name="Freeman G.J."/>
            <person name="Kutok J.L."/>
            <person name="Aster J.C."/>
            <person name="Shipp M.A."/>
        </authorList>
    </citation>
    <scope>INTERACTION WITH DTX3L</scope>
</reference>
<reference key="7">
    <citation type="journal article" date="2006" name="Mol. Cell. Biol.">
        <title>BAL1 and BBAP are regulated by a gamma interferon-responsive bidirectional promoter and are overexpressed in diffuse large B-cell lymphomas with a prominent inflammatory infiltrate.</title>
        <authorList>
            <person name="Juszczynski P."/>
            <person name="Kutok J.L."/>
            <person name="Li C."/>
            <person name="Mitra J."/>
            <person name="Aguiar R.C.T."/>
            <person name="Shipp M.A."/>
        </authorList>
    </citation>
    <scope>FUNCTION</scope>
    <scope>SUBCELLULAR LOCATION</scope>
    <scope>TISSUE SPECIFICITY</scope>
    <scope>INDUCTION</scope>
</reference>
<reference key="8">
    <citation type="journal article" date="2010" name="Trends Biochem. Sci.">
        <title>Toward a unified nomenclature for mammalian ADP-ribosyltransferases.</title>
        <authorList>
            <person name="Hottiger M.O."/>
            <person name="Hassa P.O."/>
            <person name="Luscher B."/>
            <person name="Schuler H."/>
            <person name="Koch-Nolte F."/>
        </authorList>
    </citation>
    <scope>NOMENCLATURE</scope>
</reference>
<reference key="9">
    <citation type="journal article" date="2013" name="Mol. Cell. Biol.">
        <title>BAL1 and its partner E3 ligase, BBAP, link Poly(ADP-ribose) activation, ubiquitylation, and double-strand DNA repair independent of ATM, MDC1, and RNF8.</title>
        <authorList>
            <person name="Yan Q."/>
            <person name="Xu R."/>
            <person name="Zhu L."/>
            <person name="Cheng X."/>
            <person name="Wang Z."/>
            <person name="Manis J."/>
            <person name="Shipp M.A."/>
        </authorList>
    </citation>
    <scope>FUNCTION</scope>
    <scope>SUBCELLULAR LOCATION</scope>
    <scope>INTERACTION WITH PARP1</scope>
    <scope>DOMAIN MACRO 2</scope>
</reference>
<reference key="10">
    <citation type="journal article" date="2015" name="Nat. Immunol.">
        <title>PARP9-DTX3L ubiquitin ligase targets host histone H2BJ and viral 3C protease to enhance interferon signaling and control viral infection.</title>
        <authorList>
            <person name="Zhang Y."/>
            <person name="Mao D."/>
            <person name="Roswit W.T."/>
            <person name="Jin X."/>
            <person name="Patel A.C."/>
            <person name="Patel D.A."/>
            <person name="Agapov E."/>
            <person name="Wang Z."/>
            <person name="Tidwell R.M."/>
            <person name="Atkinson J.J."/>
            <person name="Huang G."/>
            <person name="McCarthy R."/>
            <person name="Yu J."/>
            <person name="Yun N.E."/>
            <person name="Paessler S."/>
            <person name="Lawson T.G."/>
            <person name="Omattage N.S."/>
            <person name="Brett T.J."/>
            <person name="Holtzman M.J."/>
        </authorList>
    </citation>
    <scope>FUNCTION</scope>
    <scope>INTERACTION WITH DTX3L AND STAT1</scope>
    <scope>IDENTIFICATION IN A COMPLEX WITH DTX3L; STAT1 AND H2BC9</scope>
    <scope>SUBCELLULAR LOCATION</scope>
    <scope>INDUCTION</scope>
    <scope>DOMAIN</scope>
    <scope>MUTAGENESIS OF GLY-147 AND GLY-346</scope>
</reference>
<reference key="11">
    <citation type="journal article" date="2016" name="Nat. Commun.">
        <title>PARP9 and PARP14 cross-regulate macrophage activation via STAT1 ADP-ribosylation.</title>
        <authorList>
            <person name="Iwata H."/>
            <person name="Goettsch C."/>
            <person name="Sharma A."/>
            <person name="Ricchiuto P."/>
            <person name="Goh W.W."/>
            <person name="Halu A."/>
            <person name="Yamada I."/>
            <person name="Yoshida H."/>
            <person name="Hara T."/>
            <person name="Wei M."/>
            <person name="Inoue N."/>
            <person name="Fukuda D."/>
            <person name="Mojcher A."/>
            <person name="Mattson P.C."/>
            <person name="Barabasi A.L."/>
            <person name="Boothby M."/>
            <person name="Aikawa E."/>
            <person name="Singh S.A."/>
            <person name="Aikawa M."/>
        </authorList>
    </citation>
    <scope>FUNCTION</scope>
    <scope>INTERACTION WITH PARP14</scope>
    <scope>SUBCELLULAR LOCATION</scope>
    <scope>TISSUE SPECIFICITY</scope>
    <scope>INDUCTION</scope>
    <scope>ADP-RIBOSYLATION</scope>
</reference>
<reference key="12">
    <citation type="journal article" date="2017" name="Mol. Cell">
        <title>Ubiquitin Modification by the E3 Ligase/ADP-Ribosyltransferase Dtx3L/Parp9.</title>
        <authorList>
            <person name="Yang C.S."/>
            <person name="Jividen K."/>
            <person name="Spencer A."/>
            <person name="Dworak N."/>
            <person name="Ni L."/>
            <person name="Oostdyk L.T."/>
            <person name="Chatterjee M."/>
            <person name="Kusmider B."/>
            <person name="Reon B."/>
            <person name="Parlak M."/>
            <person name="Gorbunova V."/>
            <person name="Abbas T."/>
            <person name="Jeffery E."/>
            <person name="Sherman N.E."/>
            <person name="Paschal B.M."/>
        </authorList>
    </citation>
    <scope>FUNCTION</scope>
    <scope>CATALYTIC ACTIVITY</scope>
    <scope>ACTIVITY REGULATION</scope>
    <scope>BIOPHYSICOCHEMICAL PROPERTIES</scope>
    <scope>IDENTIFICATION IN A COMPLEX WITH DTX3L</scope>
    <scope>SUBCELLULAR LOCATION</scope>
    <scope>DOMAIN</scope>
    <scope>MUTAGENESIS OF GLY-147; GLY-346; 719-GLY--ARG-722; TYR-737; PHE-738; 766-VAL--GLY-769; 780-VAL--LEU-784; 802-PRO--GLU-803 AND 831-TYR--ASP-854</scope>
</reference>
<reference key="13">
    <citation type="submission" date="2015-02" db="PDB data bank">
        <title>Structure of Parp9 2Nd Macrodomain.</title>
        <authorList>
            <person name="Elkins J.M."/>
        </authorList>
    </citation>
    <scope>X-RAY CRYSTALLOGRAPHY (1.55 ANGSTROMS) OF 310-493</scope>
</reference>
<organism>
    <name type="scientific">Homo sapiens</name>
    <name type="common">Human</name>
    <dbReference type="NCBI Taxonomy" id="9606"/>
    <lineage>
        <taxon>Eukaryota</taxon>
        <taxon>Metazoa</taxon>
        <taxon>Chordata</taxon>
        <taxon>Craniata</taxon>
        <taxon>Vertebrata</taxon>
        <taxon>Euteleostomi</taxon>
        <taxon>Mammalia</taxon>
        <taxon>Eutheria</taxon>
        <taxon>Euarchontoglires</taxon>
        <taxon>Primates</taxon>
        <taxon>Haplorrhini</taxon>
        <taxon>Catarrhini</taxon>
        <taxon>Hominidae</taxon>
        <taxon>Homo</taxon>
    </lineage>
</organism>
<evidence type="ECO:0000250" key="1">
    <source>
        <dbReference type="UniProtKB" id="Q8CAS9"/>
    </source>
</evidence>
<evidence type="ECO:0000255" key="2">
    <source>
        <dbReference type="PROSITE-ProRule" id="PRU00397"/>
    </source>
</evidence>
<evidence type="ECO:0000255" key="3">
    <source>
        <dbReference type="PROSITE-ProRule" id="PRU00490"/>
    </source>
</evidence>
<evidence type="ECO:0000269" key="4">
    <source>
    </source>
</evidence>
<evidence type="ECO:0000269" key="5">
    <source>
    </source>
</evidence>
<evidence type="ECO:0000269" key="6">
    <source>
    </source>
</evidence>
<evidence type="ECO:0000269" key="7">
    <source>
    </source>
</evidence>
<evidence type="ECO:0000269" key="8">
    <source>
    </source>
</evidence>
<evidence type="ECO:0000269" key="9">
    <source>
    </source>
</evidence>
<evidence type="ECO:0000269" key="10">
    <source>
    </source>
</evidence>
<evidence type="ECO:0000269" key="11">
    <source>
    </source>
</evidence>
<evidence type="ECO:0000269" key="12">
    <source>
    </source>
</evidence>
<evidence type="ECO:0000303" key="13">
    <source>
    </source>
</evidence>
<evidence type="ECO:0000303" key="14">
    <source>
    </source>
</evidence>
<evidence type="ECO:0000303" key="15">
    <source>
    </source>
</evidence>
<evidence type="ECO:0000305" key="16"/>
<evidence type="ECO:0007829" key="17">
    <source>
        <dbReference type="PDB" id="5AIL"/>
    </source>
</evidence>
<accession>Q8IXQ6</accession>
<accession>A8KA94</accession>
<accession>B2R8S9</accession>
<accession>E9PFM7</accession>
<accession>Q8TCP3</accession>
<accession>Q9BZL8</accession>
<accession>Q9BZL9</accession>